<comment type="function">
    <text evidence="3">Component of the chromosomal passenger complex (CPC), a complex that acts as a key regulator of mitosis. The CPC complex has essential functions at the centromere in ensuring correct chromosome alignment and segregation and is required for chromatin-induced microtubule stabilization and spindle assembly. Stimulates the mitotic kinase activity of aurkb/aurora-B in the CPC. Does not appear to exhibit anti-apoptotic activity (By similarity).</text>
</comment>
<comment type="subunit">
    <text evidence="1">Component of the CPC at least composed of survivin/birc5, incenp, cdca8/borealin and/or cdca9/dasra-A, and aurkb/aurora-B. Interacts directly with incenp (via N-terminus), and may weakly interact with aurkb (via N-terminus) to stabilize the complex. Interacts with GTP-bound ran in both the S and M phases of the cell cycle. Also found in a complex with ubiquitin-mediated signaling proteins including at least usp9x/xFAM, nploc4/npl4 and ufd1 (By similarity).</text>
</comment>
<comment type="subcellular location">
    <subcellularLocation>
        <location evidence="2">Cytoplasm</location>
    </subcellularLocation>
    <subcellularLocation>
        <location evidence="2">Nucleus</location>
    </subcellularLocation>
    <subcellularLocation>
        <location evidence="2">Chromosome</location>
        <location evidence="2">Centromere</location>
    </subcellularLocation>
    <subcellularLocation>
        <location evidence="1">Cytoplasm</location>
        <location evidence="1">Cytoskeleton</location>
        <location evidence="1">Spindle</location>
    </subcellularLocation>
    <text evidence="2">Localizes on chromosome arms and inner centromeres from prophase through metaphase and then transferring to the spindle midzone and midbody from anaphase through cytokinesis.</text>
</comment>
<comment type="domain">
    <text evidence="3">C-terminus is required for spindle assembly.</text>
</comment>
<comment type="PTM">
    <text evidence="2">Ubiquitination is required for centrosome-targeting.</text>
</comment>
<comment type="similarity">
    <text evidence="4">Belongs to the IAP family.</text>
</comment>
<sequence length="160" mass="18756">MHSAKNRFVQAVQRLQDFRNMYDYEARLATFADWPFTENCKCTPENMAKAGFVHCPTENEPDVACCFFCLKELEGWEPDDDPWTEHSKRSASCGFLSLTKCVNDLTMEGFLRLEADRIKSFYRKFSTVVLQYVEEEMTATTKRLLEYFSNQHQCSIDLDR</sequence>
<dbReference type="EMBL" id="CR761050">
    <property type="protein sequence ID" value="CAJ81488.1"/>
    <property type="molecule type" value="mRNA"/>
</dbReference>
<dbReference type="SMR" id="Q28H51"/>
<dbReference type="STRING" id="8364.ENSXETP00000034233"/>
<dbReference type="MEROPS" id="I32.005"/>
<dbReference type="PaxDb" id="8364-ENSXETP00000009347"/>
<dbReference type="KEGG" id="xtr:733532"/>
<dbReference type="AGR" id="Xenbase:XB-GENE-5850943"/>
<dbReference type="CTD" id="107768"/>
<dbReference type="Xenbase" id="XB-GENE-5850943">
    <property type="gene designation" value="birc5"/>
</dbReference>
<dbReference type="eggNOG" id="KOG1101">
    <property type="taxonomic scope" value="Eukaryota"/>
</dbReference>
<dbReference type="HOGENOM" id="CLU_016347_0_3_1"/>
<dbReference type="InParanoid" id="Q28H51"/>
<dbReference type="OMA" id="YMLEMTR"/>
<dbReference type="OrthoDB" id="2196114at2759"/>
<dbReference type="PhylomeDB" id="Q28H51"/>
<dbReference type="TreeFam" id="TF105356"/>
<dbReference type="Proteomes" id="UP000008143">
    <property type="component" value="Chromosome 2"/>
</dbReference>
<dbReference type="Bgee" id="ENSXETG00000004294">
    <property type="expression patterns" value="Expressed in 4-cell stage embryo and 6 other cell types or tissues"/>
</dbReference>
<dbReference type="GO" id="GO:0005694">
    <property type="term" value="C:chromosome"/>
    <property type="evidence" value="ECO:0000250"/>
    <property type="project" value="UniProtKB"/>
</dbReference>
<dbReference type="GO" id="GO:0032133">
    <property type="term" value="C:chromosome passenger complex"/>
    <property type="evidence" value="ECO:0000250"/>
    <property type="project" value="UniProtKB"/>
</dbReference>
<dbReference type="GO" id="GO:0005737">
    <property type="term" value="C:cytoplasm"/>
    <property type="evidence" value="ECO:0007669"/>
    <property type="project" value="UniProtKB-SubCell"/>
</dbReference>
<dbReference type="GO" id="GO:0000776">
    <property type="term" value="C:kinetochore"/>
    <property type="evidence" value="ECO:0000250"/>
    <property type="project" value="UniProtKB"/>
</dbReference>
<dbReference type="GO" id="GO:0030496">
    <property type="term" value="C:midbody"/>
    <property type="evidence" value="ECO:0000250"/>
    <property type="project" value="UniProtKB"/>
</dbReference>
<dbReference type="GO" id="GO:0005634">
    <property type="term" value="C:nucleus"/>
    <property type="evidence" value="ECO:0000250"/>
    <property type="project" value="UniProtKB"/>
</dbReference>
<dbReference type="GO" id="GO:0005819">
    <property type="term" value="C:spindle"/>
    <property type="evidence" value="ECO:0007669"/>
    <property type="project" value="UniProtKB-SubCell"/>
</dbReference>
<dbReference type="GO" id="GO:0046872">
    <property type="term" value="F:metal ion binding"/>
    <property type="evidence" value="ECO:0007669"/>
    <property type="project" value="UniProtKB-KW"/>
</dbReference>
<dbReference type="GO" id="GO:0031267">
    <property type="term" value="F:small GTPase binding"/>
    <property type="evidence" value="ECO:0000250"/>
    <property type="project" value="UniProtKB"/>
</dbReference>
<dbReference type="GO" id="GO:0051301">
    <property type="term" value="P:cell division"/>
    <property type="evidence" value="ECO:0007669"/>
    <property type="project" value="UniProtKB-KW"/>
</dbReference>
<dbReference type="GO" id="GO:0043066">
    <property type="term" value="P:negative regulation of apoptotic process"/>
    <property type="evidence" value="ECO:0000250"/>
    <property type="project" value="UniProtKB"/>
</dbReference>
<dbReference type="GO" id="GO:0045892">
    <property type="term" value="P:negative regulation of DNA-templated transcription"/>
    <property type="evidence" value="ECO:0000250"/>
    <property type="project" value="UniProtKB"/>
</dbReference>
<dbReference type="GO" id="GO:0051225">
    <property type="term" value="P:spindle assembly"/>
    <property type="evidence" value="ECO:0000250"/>
    <property type="project" value="UniProtKB"/>
</dbReference>
<dbReference type="CDD" id="cd00022">
    <property type="entry name" value="BIR"/>
    <property type="match status" value="1"/>
</dbReference>
<dbReference type="FunFam" id="1.10.1170.10:FF:000009">
    <property type="entry name" value="Baculoviral IAP repeat-containing protein 5"/>
    <property type="match status" value="1"/>
</dbReference>
<dbReference type="Gene3D" id="1.10.1170.10">
    <property type="entry name" value="Inhibitor Of Apoptosis Protein (2mihbC-IAP-1), Chain A"/>
    <property type="match status" value="1"/>
</dbReference>
<dbReference type="InterPro" id="IPR051190">
    <property type="entry name" value="Baculoviral_IAP"/>
</dbReference>
<dbReference type="InterPro" id="IPR001370">
    <property type="entry name" value="BIR_rpt"/>
</dbReference>
<dbReference type="PANTHER" id="PTHR46771:SF2">
    <property type="entry name" value="BACULOVIRAL IAP REPEAT-CONTAINING PROTEIN 5.1"/>
    <property type="match status" value="1"/>
</dbReference>
<dbReference type="PANTHER" id="PTHR46771">
    <property type="entry name" value="DETERIN"/>
    <property type="match status" value="1"/>
</dbReference>
<dbReference type="Pfam" id="PF00653">
    <property type="entry name" value="BIR"/>
    <property type="match status" value="1"/>
</dbReference>
<dbReference type="SMART" id="SM00238">
    <property type="entry name" value="BIR"/>
    <property type="match status" value="1"/>
</dbReference>
<dbReference type="SUPFAM" id="SSF57924">
    <property type="entry name" value="Inhibitor of apoptosis (IAP) repeat"/>
    <property type="match status" value="1"/>
</dbReference>
<dbReference type="PROSITE" id="PS50143">
    <property type="entry name" value="BIR_REPEAT_2"/>
    <property type="match status" value="1"/>
</dbReference>
<organism>
    <name type="scientific">Xenopus tropicalis</name>
    <name type="common">Western clawed frog</name>
    <name type="synonym">Silurana tropicalis</name>
    <dbReference type="NCBI Taxonomy" id="8364"/>
    <lineage>
        <taxon>Eukaryota</taxon>
        <taxon>Metazoa</taxon>
        <taxon>Chordata</taxon>
        <taxon>Craniata</taxon>
        <taxon>Vertebrata</taxon>
        <taxon>Euteleostomi</taxon>
        <taxon>Amphibia</taxon>
        <taxon>Batrachia</taxon>
        <taxon>Anura</taxon>
        <taxon>Pipoidea</taxon>
        <taxon>Pipidae</taxon>
        <taxon>Xenopodinae</taxon>
        <taxon>Xenopus</taxon>
        <taxon>Silurana</taxon>
    </lineage>
</organism>
<accession>Q28H51</accession>
<reference evidence="6" key="1">
    <citation type="submission" date="2006-10" db="EMBL/GenBank/DDBJ databases">
        <authorList>
            <consortium name="Sanger Xenopus tropicalis EST/cDNA project"/>
        </authorList>
    </citation>
    <scope>NUCLEOTIDE SEQUENCE [LARGE SCALE MRNA]</scope>
    <source>
        <tissue evidence="6">Egg</tissue>
    </source>
</reference>
<name>BIR51_XENTR</name>
<protein>
    <recommendedName>
        <fullName>Baculoviral IAP repeat-containing protein 5.1</fullName>
    </recommendedName>
    <alternativeName>
        <fullName evidence="3">Survivin1</fullName>
    </alternativeName>
</protein>
<proteinExistence type="evidence at transcript level"/>
<evidence type="ECO:0000250" key="1"/>
<evidence type="ECO:0000250" key="2">
    <source>
        <dbReference type="UniProtKB" id="O15392"/>
    </source>
</evidence>
<evidence type="ECO:0000250" key="3">
    <source>
        <dbReference type="UniProtKB" id="Q8JGN5"/>
    </source>
</evidence>
<evidence type="ECO:0000255" key="4"/>
<evidence type="ECO:0000255" key="5">
    <source>
        <dbReference type="PROSITE-ProRule" id="PRU00029"/>
    </source>
</evidence>
<evidence type="ECO:0000312" key="6">
    <source>
        <dbReference type="EMBL" id="CAJ81488.1"/>
    </source>
</evidence>
<keyword id="KW-0131">Cell cycle</keyword>
<keyword id="KW-0132">Cell division</keyword>
<keyword id="KW-0137">Centromere</keyword>
<keyword id="KW-0158">Chromosome</keyword>
<keyword id="KW-0159">Chromosome partition</keyword>
<keyword id="KW-0963">Cytoplasm</keyword>
<keyword id="KW-0206">Cytoskeleton</keyword>
<keyword id="KW-0479">Metal-binding</keyword>
<keyword id="KW-0498">Mitosis</keyword>
<keyword id="KW-0539">Nucleus</keyword>
<keyword id="KW-0597">Phosphoprotein</keyword>
<keyword id="KW-1185">Reference proteome</keyword>
<keyword id="KW-0832">Ubl conjugation</keyword>
<keyword id="KW-0862">Zinc</keyword>
<feature type="chain" id="PRO_0000382463" description="Baculoviral IAP repeat-containing protein 5.1">
    <location>
        <begin position="1"/>
        <end position="160"/>
    </location>
</feature>
<feature type="repeat" description="BIR" evidence="4">
    <location>
        <begin position="27"/>
        <end position="97"/>
    </location>
</feature>
<feature type="binding site" evidence="2 5">
    <location>
        <position position="66"/>
    </location>
    <ligand>
        <name>Zn(2+)</name>
        <dbReference type="ChEBI" id="CHEBI:29105"/>
    </ligand>
</feature>
<feature type="binding site" evidence="2 5">
    <location>
        <position position="69"/>
    </location>
    <ligand>
        <name>Zn(2+)</name>
        <dbReference type="ChEBI" id="CHEBI:29105"/>
    </ligand>
</feature>
<feature type="binding site" evidence="2 5">
    <location>
        <position position="86"/>
    </location>
    <ligand>
        <name>Zn(2+)</name>
        <dbReference type="ChEBI" id="CHEBI:29105"/>
    </ligand>
</feature>
<feature type="binding site" evidence="2 5">
    <location>
        <position position="93"/>
    </location>
    <ligand>
        <name>Zn(2+)</name>
        <dbReference type="ChEBI" id="CHEBI:29105"/>
    </ligand>
</feature>
<feature type="modified residue" description="Phosphothreonine; by CDK1" evidence="1">
    <location>
        <position position="43"/>
    </location>
</feature>
<gene>
    <name type="primary">birc5.1</name>
    <name type="ORF">TEgg052f17.1</name>
</gene>